<accession>P0DV80</accession>
<protein>
    <recommendedName>
        <fullName evidence="4">Bradykinin-potentiating peptide 10 g-AP</fullName>
        <shortName evidence="2">BPP-10 g-AP</shortName>
    </recommendedName>
</protein>
<reference key="1">
    <citation type="journal article" date="2017" name="J. Venom. Anim. Toxins Incl. Trop. Dis.">
        <title>Isolation and biochemical characterization of bradykinin-potentiating peptides from Bitis gabonica rhinoceros.</title>
        <authorList>
            <person name="Fucase T.M."/>
            <person name="Sciani J.M."/>
            <person name="Cavalcante I."/>
            <person name="Viala V.L."/>
            <person name="Chagas B.B."/>
            <person name="Pimenta D.C."/>
            <person name="Spencer P.J."/>
        </authorList>
    </citation>
    <scope>PROTEIN SEQUENCE</scope>
    <scope>FUNCTION</scope>
    <scope>IDENTIFICATION BY MASS SPECTROMETRY</scope>
    <scope>SUBCELLULAR LOCATION</scope>
    <scope>SYNTHESIS</scope>
    <source>
        <tissue>Venom</tissue>
    </source>
</reference>
<feature type="peptide" id="PRO_0000455655" description="Bradykinin-potentiating peptide 10 g-AP" evidence="1">
    <location>
        <begin position="1"/>
        <end position="12"/>
    </location>
</feature>
<dbReference type="GO" id="GO:0005576">
    <property type="term" value="C:extracellular region"/>
    <property type="evidence" value="ECO:0007669"/>
    <property type="project" value="UniProtKB-SubCell"/>
</dbReference>
<dbReference type="GO" id="GO:0090729">
    <property type="term" value="F:toxin activity"/>
    <property type="evidence" value="ECO:0007669"/>
    <property type="project" value="UniProtKB-KW"/>
</dbReference>
<dbReference type="GO" id="GO:0008217">
    <property type="term" value="P:regulation of blood pressure"/>
    <property type="evidence" value="ECO:0007669"/>
    <property type="project" value="UniProtKB-KW"/>
</dbReference>
<keyword id="KW-0903">Direct protein sequencing</keyword>
<keyword id="KW-0382">Hypotensive agent</keyword>
<keyword id="KW-0964">Secreted</keyword>
<keyword id="KW-0800">Toxin</keyword>
<evidence type="ECO:0000269" key="1">
    <source>
    </source>
</evidence>
<evidence type="ECO:0000303" key="2">
    <source>
    </source>
</evidence>
<evidence type="ECO:0000305" key="3"/>
<evidence type="ECO:0000305" key="4">
    <source>
    </source>
</evidence>
<name>BPP_BITRH</name>
<proteinExistence type="evidence at protein level"/>
<sequence>APQERGPPEIPP</sequence>
<organism>
    <name type="scientific">Bitis rhinoceros</name>
    <name type="common">West African gaboon viper</name>
    <name type="synonym">Vipera rhinoceros</name>
    <dbReference type="NCBI Taxonomy" id="715877"/>
    <lineage>
        <taxon>Eukaryota</taxon>
        <taxon>Metazoa</taxon>
        <taxon>Chordata</taxon>
        <taxon>Craniata</taxon>
        <taxon>Vertebrata</taxon>
        <taxon>Euteleostomi</taxon>
        <taxon>Lepidosauria</taxon>
        <taxon>Squamata</taxon>
        <taxon>Bifurcata</taxon>
        <taxon>Unidentata</taxon>
        <taxon>Episquamata</taxon>
        <taxon>Toxicofera</taxon>
        <taxon>Serpentes</taxon>
        <taxon>Colubroidea</taxon>
        <taxon>Viperidae</taxon>
        <taxon>Viperinae</taxon>
        <taxon>Bitis</taxon>
    </lineage>
</organism>
<comment type="function">
    <text evidence="1 4">Bradykinin-potentiating peptide (PubMed:28670326). Shows poor inhibition over ACE (Ki=1 mM) (PubMed:28670326). In vivo, potentiates bradykinin activity by increasing its edema-inducing activity in rat paw (PubMed:28670326). May also potentiate the hypotensive effects of bradykinin (Probable).</text>
</comment>
<comment type="subcellular location">
    <subcellularLocation>
        <location evidence="1">Secreted</location>
    </subcellularLocation>
</comment>
<comment type="tissue specificity">
    <text evidence="4">Expressed by the venom gland.</text>
</comment>
<comment type="similarity">
    <text evidence="3">Belongs to the bradykinin-potentiating peptide family.</text>
</comment>